<evidence type="ECO:0000250" key="1">
    <source>
        <dbReference type="UniProtKB" id="P07997"/>
    </source>
</evidence>
<evidence type="ECO:0000250" key="2">
    <source>
        <dbReference type="UniProtKB" id="P13196"/>
    </source>
</evidence>
<evidence type="ECO:0000250" key="3">
    <source>
        <dbReference type="UniProtKB" id="P18079"/>
    </source>
</evidence>
<evidence type="ECO:0000250" key="4">
    <source>
        <dbReference type="UniProtKB" id="P22557"/>
    </source>
</evidence>
<evidence type="ECO:0000256" key="5">
    <source>
        <dbReference type="SAM" id="MobiDB-lite"/>
    </source>
</evidence>
<evidence type="ECO:0000305" key="6"/>
<sequence>METVVRSCPFLSRVPQAFLQKAGKSLLFYAQNCPKMMEVGAKPAPRALSTAAVHYQQIKETPPASEKDKTAKAKVQQTPDGSQQSPDGTQLPSGHPLPATSQGTASKCPFLAAQMNQRGSSVFCKASLELQEDVQEMNAVRKEVAETSGGPSVVSVKTDGGDPSGLLKNFQDIMQKQRPERVSHLLQDDLPKSVSTFQYDRFFEKKIDEKKNDHTYRVFKTVNRRAHIFPMADDYSDSLITKKQVSVWCSNDYLGMSRHPRVCGAVMDTLKQHGAGAGGTRNISGTSKFHVDLERELADLHGKDAALLFSSCFVANDSTLFTLAKMMPGCEIYSDSGNHASMIQGIRNSRVPKYIFRHNDVSHLRELLQRSDPSVPKIVAFETVHSMDGAVCPLEELCDVAHEFGAITFVDEVHAVGLYGARGGGIGDRDGVMPKMDIISGTLGKAFGCVGGYIASTSSLIDTVRSYAAGFIFTTSLPPMLLAGALESVRILKSAEGRVLRRQHQRNVKLMRQMLMDAGLPVVHCPSHIIPVRVADAAKNTEVCDELMSRHNIYVQAINYPTVPRGEELLRIAPTPHHTPQMMNYFLENLLVTWKQVGLELEPHSSAECNFCRRPLHFEVMSEREKSYFSGLSKLVSAQA</sequence>
<gene>
    <name type="primary">ALAS1</name>
</gene>
<name>HEM1_PONAB</name>
<proteinExistence type="evidence at transcript level"/>
<feature type="transit peptide" description="Mitochondrion" evidence="1">
    <location>
        <begin position="1"/>
        <end position="56"/>
    </location>
</feature>
<feature type="chain" id="PRO_0000352677" description="5-aminolevulinate synthase, non-specific, mitochondrial">
    <location>
        <begin position="57"/>
        <end position="640"/>
    </location>
</feature>
<feature type="region of interest" description="Disordered" evidence="5">
    <location>
        <begin position="60"/>
        <end position="103"/>
    </location>
</feature>
<feature type="region of interest" description="Disordered" evidence="5">
    <location>
        <begin position="143"/>
        <end position="163"/>
    </location>
</feature>
<feature type="compositionally biased region" description="Polar residues" evidence="5">
    <location>
        <begin position="75"/>
        <end position="92"/>
    </location>
</feature>
<feature type="active site" evidence="3">
    <location>
        <position position="445"/>
    </location>
</feature>
<feature type="binding site" evidence="3">
    <location>
        <position position="217"/>
    </location>
    <ligand>
        <name>substrate</name>
    </ligand>
</feature>
<feature type="binding site" evidence="3">
    <location>
        <position position="334"/>
    </location>
    <ligand>
        <name>substrate</name>
    </ligand>
</feature>
<feature type="binding site" evidence="3">
    <location>
        <position position="353"/>
    </location>
    <ligand>
        <name>substrate</name>
    </ligand>
</feature>
<feature type="binding site" description="in other chain" evidence="3">
    <location>
        <position position="386"/>
    </location>
    <ligand>
        <name>pyridoxal 5'-phosphate</name>
        <dbReference type="ChEBI" id="CHEBI:597326"/>
        <note>ligand shared between dimeric partners</note>
    </ligand>
</feature>
<feature type="binding site" description="in other chain" evidence="3">
    <location>
        <position position="414"/>
    </location>
    <ligand>
        <name>pyridoxal 5'-phosphate</name>
        <dbReference type="ChEBI" id="CHEBI:597326"/>
        <note>ligand shared between dimeric partners</note>
    </ligand>
</feature>
<feature type="binding site" description="in other chain" evidence="3">
    <location>
        <position position="442"/>
    </location>
    <ligand>
        <name>pyridoxal 5'-phosphate</name>
        <dbReference type="ChEBI" id="CHEBI:597326"/>
        <note>ligand shared between dimeric partners</note>
    </ligand>
</feature>
<feature type="binding site" evidence="3">
    <location>
        <position position="474"/>
    </location>
    <ligand>
        <name>pyridoxal 5'-phosphate</name>
        <dbReference type="ChEBI" id="CHEBI:597326"/>
        <note>ligand shared between dimeric partners</note>
    </ligand>
</feature>
<feature type="binding site" evidence="3">
    <location>
        <position position="475"/>
    </location>
    <ligand>
        <name>pyridoxal 5'-phosphate</name>
        <dbReference type="ChEBI" id="CHEBI:597326"/>
        <note>ligand shared between dimeric partners</note>
    </ligand>
</feature>
<feature type="binding site" evidence="3">
    <location>
        <position position="562"/>
    </location>
    <ligand>
        <name>substrate</name>
    </ligand>
</feature>
<feature type="modified residue" description="N6-(pyridoxal phosphate)lysine" evidence="3">
    <location>
        <position position="445"/>
    </location>
</feature>
<feature type="modified residue" description="Hydroxyproline" evidence="2">
    <location>
        <position position="576"/>
    </location>
</feature>
<accession>Q5R9R9</accession>
<protein>
    <recommendedName>
        <fullName>5-aminolevulinate synthase, non-specific, mitochondrial</fullName>
        <shortName>ALAS-H</shortName>
        <ecNumber evidence="2">2.3.1.37</ecNumber>
    </recommendedName>
    <alternativeName>
        <fullName>5-aminolevulinic acid synthase 1</fullName>
    </alternativeName>
    <alternativeName>
        <fullName>Delta-ALA synthase 1</fullName>
    </alternativeName>
    <alternativeName>
        <fullName>Delta-aminolevulinate synthase 1</fullName>
    </alternativeName>
</protein>
<comment type="function">
    <text evidence="2">Catalyzes the pyridoxal 5'-phosphate (PLP)-dependent condensation of succinyl-CoA and glycine to form aminolevulinic acid (ALA), with CoA and CO2 as by-products.</text>
</comment>
<comment type="catalytic activity">
    <reaction evidence="2">
        <text>succinyl-CoA + glycine + H(+) = 5-aminolevulinate + CO2 + CoA</text>
        <dbReference type="Rhea" id="RHEA:12921"/>
        <dbReference type="ChEBI" id="CHEBI:15378"/>
        <dbReference type="ChEBI" id="CHEBI:16526"/>
        <dbReference type="ChEBI" id="CHEBI:57287"/>
        <dbReference type="ChEBI" id="CHEBI:57292"/>
        <dbReference type="ChEBI" id="CHEBI:57305"/>
        <dbReference type="ChEBI" id="CHEBI:356416"/>
        <dbReference type="EC" id="2.3.1.37"/>
    </reaction>
    <physiologicalReaction direction="left-to-right" evidence="2">
        <dbReference type="Rhea" id="RHEA:12922"/>
    </physiologicalReaction>
</comment>
<comment type="cofactor">
    <cofactor evidence="2">
        <name>pyridoxal 5'-phosphate</name>
        <dbReference type="ChEBI" id="CHEBI:597326"/>
    </cofactor>
</comment>
<comment type="pathway">
    <text>Porphyrin-containing compound metabolism; protoporphyrin-IX biosynthesis; 5-aminolevulinate from glycine: step 1/1.</text>
</comment>
<comment type="subunit">
    <text evidence="2 4">Homodimer (By similarity). Interacts (hydroxylated form) with VHL (By similarity).</text>
</comment>
<comment type="subcellular location">
    <subcellularLocation>
        <location evidence="4">Mitochondrion inner membrane</location>
        <topology evidence="4">Peripheral membrane protein</topology>
    </subcellularLocation>
    <text evidence="4">Localizes to the matrix side of the mitochondrion inner membrane.</text>
</comment>
<comment type="PTM">
    <text evidence="2">In normoxia, is hydroxylated at Pro-576, promoting interaction with VHL, initiating ubiquitination and subsequent degradation via the proteasome.</text>
</comment>
<comment type="PTM">
    <text evidence="2">Ubiquitinated; in normoxia following hydroxylation and interaction with VHL, leading to its subsequent degradation via the proteasome.</text>
</comment>
<comment type="similarity">
    <text evidence="6">Belongs to the class-II pyridoxal-phosphate-dependent aminotransferase family.</text>
</comment>
<keyword id="KW-0012">Acyltransferase</keyword>
<keyword id="KW-0350">Heme biosynthesis</keyword>
<keyword id="KW-0379">Hydroxylation</keyword>
<keyword id="KW-0472">Membrane</keyword>
<keyword id="KW-0496">Mitochondrion</keyword>
<keyword id="KW-0999">Mitochondrion inner membrane</keyword>
<keyword id="KW-0663">Pyridoxal phosphate</keyword>
<keyword id="KW-1185">Reference proteome</keyword>
<keyword id="KW-0808">Transferase</keyword>
<keyword id="KW-0809">Transit peptide</keyword>
<keyword id="KW-0832">Ubl conjugation</keyword>
<organism>
    <name type="scientific">Pongo abelii</name>
    <name type="common">Sumatran orangutan</name>
    <name type="synonym">Pongo pygmaeus abelii</name>
    <dbReference type="NCBI Taxonomy" id="9601"/>
    <lineage>
        <taxon>Eukaryota</taxon>
        <taxon>Metazoa</taxon>
        <taxon>Chordata</taxon>
        <taxon>Craniata</taxon>
        <taxon>Vertebrata</taxon>
        <taxon>Euteleostomi</taxon>
        <taxon>Mammalia</taxon>
        <taxon>Eutheria</taxon>
        <taxon>Euarchontoglires</taxon>
        <taxon>Primates</taxon>
        <taxon>Haplorrhini</taxon>
        <taxon>Catarrhini</taxon>
        <taxon>Hominidae</taxon>
        <taxon>Pongo</taxon>
    </lineage>
</organism>
<reference key="1">
    <citation type="submission" date="2004-11" db="EMBL/GenBank/DDBJ databases">
        <authorList>
            <consortium name="The German cDNA consortium"/>
        </authorList>
    </citation>
    <scope>NUCLEOTIDE SEQUENCE [LARGE SCALE MRNA]</scope>
    <source>
        <tissue>Kidney</tissue>
    </source>
</reference>
<dbReference type="EC" id="2.3.1.37" evidence="2"/>
<dbReference type="EMBL" id="CR859313">
    <property type="protein sequence ID" value="CAH91491.1"/>
    <property type="molecule type" value="mRNA"/>
</dbReference>
<dbReference type="RefSeq" id="NP_001125877.1">
    <property type="nucleotide sequence ID" value="NM_001132405.1"/>
</dbReference>
<dbReference type="SMR" id="Q5R9R9"/>
<dbReference type="FunCoup" id="Q5R9R9">
    <property type="interactions" value="1883"/>
</dbReference>
<dbReference type="STRING" id="9601.ENSPPYP00000015461"/>
<dbReference type="GeneID" id="100172808"/>
<dbReference type="KEGG" id="pon:100172808"/>
<dbReference type="CTD" id="211"/>
<dbReference type="eggNOG" id="KOG1360">
    <property type="taxonomic scope" value="Eukaryota"/>
</dbReference>
<dbReference type="InParanoid" id="Q5R9R9"/>
<dbReference type="OrthoDB" id="10263824at2759"/>
<dbReference type="UniPathway" id="UPA00251">
    <property type="reaction ID" value="UER00375"/>
</dbReference>
<dbReference type="Proteomes" id="UP000001595">
    <property type="component" value="Unplaced"/>
</dbReference>
<dbReference type="GO" id="GO:0005743">
    <property type="term" value="C:mitochondrial inner membrane"/>
    <property type="evidence" value="ECO:0007669"/>
    <property type="project" value="UniProtKB-SubCell"/>
</dbReference>
<dbReference type="GO" id="GO:0005759">
    <property type="term" value="C:mitochondrial matrix"/>
    <property type="evidence" value="ECO:0007669"/>
    <property type="project" value="InterPro"/>
</dbReference>
<dbReference type="GO" id="GO:0003870">
    <property type="term" value="F:5-aminolevulinate synthase activity"/>
    <property type="evidence" value="ECO:0000250"/>
    <property type="project" value="UniProtKB"/>
</dbReference>
<dbReference type="GO" id="GO:0030170">
    <property type="term" value="F:pyridoxal phosphate binding"/>
    <property type="evidence" value="ECO:0007669"/>
    <property type="project" value="InterPro"/>
</dbReference>
<dbReference type="GO" id="GO:0048821">
    <property type="term" value="P:erythrocyte development"/>
    <property type="evidence" value="ECO:0007669"/>
    <property type="project" value="TreeGrafter"/>
</dbReference>
<dbReference type="GO" id="GO:0042541">
    <property type="term" value="P:hemoglobin biosynthetic process"/>
    <property type="evidence" value="ECO:0007669"/>
    <property type="project" value="TreeGrafter"/>
</dbReference>
<dbReference type="GO" id="GO:0006782">
    <property type="term" value="P:protoporphyrinogen IX biosynthetic process"/>
    <property type="evidence" value="ECO:0007669"/>
    <property type="project" value="UniProtKB-UniPathway"/>
</dbReference>
<dbReference type="GO" id="GO:1903412">
    <property type="term" value="P:response to bile acid"/>
    <property type="evidence" value="ECO:0000250"/>
    <property type="project" value="UniProtKB"/>
</dbReference>
<dbReference type="CDD" id="cd06454">
    <property type="entry name" value="KBL_like"/>
    <property type="match status" value="1"/>
</dbReference>
<dbReference type="FunFam" id="3.90.1150.10:FF:000045">
    <property type="entry name" value="5-aminolevulinate synthase"/>
    <property type="match status" value="1"/>
</dbReference>
<dbReference type="FunFam" id="3.40.640.10:FF:000006">
    <property type="entry name" value="5-aminolevulinate synthase, mitochondrial"/>
    <property type="match status" value="1"/>
</dbReference>
<dbReference type="Gene3D" id="3.90.1150.10">
    <property type="entry name" value="Aspartate Aminotransferase, domain 1"/>
    <property type="match status" value="1"/>
</dbReference>
<dbReference type="Gene3D" id="3.40.640.10">
    <property type="entry name" value="Type I PLP-dependent aspartate aminotransferase-like (Major domain)"/>
    <property type="match status" value="1"/>
</dbReference>
<dbReference type="InterPro" id="IPR010961">
    <property type="entry name" value="4pyrrol_synth_NH2levulA_synth"/>
</dbReference>
<dbReference type="InterPro" id="IPR015118">
    <property type="entry name" value="5aminolev_synth_preseq"/>
</dbReference>
<dbReference type="InterPro" id="IPR001917">
    <property type="entry name" value="Aminotrans_II_pyridoxalP_BS"/>
</dbReference>
<dbReference type="InterPro" id="IPR004839">
    <property type="entry name" value="Aminotransferase_I/II_large"/>
</dbReference>
<dbReference type="InterPro" id="IPR050087">
    <property type="entry name" value="AON_synthase_class-II"/>
</dbReference>
<dbReference type="InterPro" id="IPR015424">
    <property type="entry name" value="PyrdxlP-dep_Trfase"/>
</dbReference>
<dbReference type="InterPro" id="IPR015421">
    <property type="entry name" value="PyrdxlP-dep_Trfase_major"/>
</dbReference>
<dbReference type="InterPro" id="IPR015422">
    <property type="entry name" value="PyrdxlP-dep_Trfase_small"/>
</dbReference>
<dbReference type="NCBIfam" id="TIGR01821">
    <property type="entry name" value="5aminolev_synth"/>
    <property type="match status" value="1"/>
</dbReference>
<dbReference type="PANTHER" id="PTHR13693:SF50">
    <property type="entry name" value="5-AMINOLEVULINATE SYNTHASE, NON-SPECIFIC, MITOCHONDRIAL"/>
    <property type="match status" value="1"/>
</dbReference>
<dbReference type="PANTHER" id="PTHR13693">
    <property type="entry name" value="CLASS II AMINOTRANSFERASE/8-AMINO-7-OXONONANOATE SYNTHASE"/>
    <property type="match status" value="1"/>
</dbReference>
<dbReference type="Pfam" id="PF00155">
    <property type="entry name" value="Aminotran_1_2"/>
    <property type="match status" value="1"/>
</dbReference>
<dbReference type="Pfam" id="PF09029">
    <property type="entry name" value="Preseq_ALAS"/>
    <property type="match status" value="1"/>
</dbReference>
<dbReference type="SUPFAM" id="SSF53383">
    <property type="entry name" value="PLP-dependent transferases"/>
    <property type="match status" value="1"/>
</dbReference>
<dbReference type="PROSITE" id="PS00599">
    <property type="entry name" value="AA_TRANSFER_CLASS_2"/>
    <property type="match status" value="1"/>
</dbReference>